<feature type="chain" id="PRO_0000182165" description="UDP-N-acetylmuramate--L-alanine ligase">
    <location>
        <begin position="1"/>
        <end position="452"/>
    </location>
</feature>
<feature type="binding site" evidence="1">
    <location>
        <begin position="119"/>
        <end position="125"/>
    </location>
    <ligand>
        <name>ATP</name>
        <dbReference type="ChEBI" id="CHEBI:30616"/>
    </ligand>
</feature>
<evidence type="ECO:0000255" key="1">
    <source>
        <dbReference type="HAMAP-Rule" id="MF_00046"/>
    </source>
</evidence>
<reference key="1">
    <citation type="journal article" date="2002" name="Proc. Natl. Acad. Sci. U.S.A.">
        <title>Genome sequence of Streptococcus mutans UA159, a cariogenic dental pathogen.</title>
        <authorList>
            <person name="Ajdic D.J."/>
            <person name="McShan W.M."/>
            <person name="McLaughlin R.E."/>
            <person name="Savic G."/>
            <person name="Chang J."/>
            <person name="Carson M.B."/>
            <person name="Primeaux C."/>
            <person name="Tian R."/>
            <person name="Kenton S."/>
            <person name="Jia H.G."/>
            <person name="Lin S.P."/>
            <person name="Qian Y."/>
            <person name="Li S."/>
            <person name="Zhu H."/>
            <person name="Najar F.Z."/>
            <person name="Lai H."/>
            <person name="White J."/>
            <person name="Roe B.A."/>
            <person name="Ferretti J.J."/>
        </authorList>
    </citation>
    <scope>NUCLEOTIDE SEQUENCE [LARGE SCALE GENOMIC DNA]</scope>
    <source>
        <strain>ATCC 700610 / UA159</strain>
    </source>
</reference>
<comment type="function">
    <text evidence="1">Cell wall formation.</text>
</comment>
<comment type="catalytic activity">
    <reaction evidence="1">
        <text>UDP-N-acetyl-alpha-D-muramate + L-alanine + ATP = UDP-N-acetyl-alpha-D-muramoyl-L-alanine + ADP + phosphate + H(+)</text>
        <dbReference type="Rhea" id="RHEA:23372"/>
        <dbReference type="ChEBI" id="CHEBI:15378"/>
        <dbReference type="ChEBI" id="CHEBI:30616"/>
        <dbReference type="ChEBI" id="CHEBI:43474"/>
        <dbReference type="ChEBI" id="CHEBI:57972"/>
        <dbReference type="ChEBI" id="CHEBI:70757"/>
        <dbReference type="ChEBI" id="CHEBI:83898"/>
        <dbReference type="ChEBI" id="CHEBI:456216"/>
        <dbReference type="EC" id="6.3.2.8"/>
    </reaction>
</comment>
<comment type="pathway">
    <text evidence="1">Cell wall biogenesis; peptidoglycan biosynthesis.</text>
</comment>
<comment type="subcellular location">
    <subcellularLocation>
        <location evidence="1">Cytoplasm</location>
    </subcellularLocation>
</comment>
<comment type="similarity">
    <text evidence="1">Belongs to the MurCDEF family.</text>
</comment>
<name>MURC_STRMU</name>
<sequence>MLTRGEEKNMSKTIHFIGIKGSGMSALALLLHQMGYKVQGSDVDKYYFTQHGLEKAGIPILPFAESNITNDMEIIAGNAFRKDNNIEVAYALENGYHFKRYHEFLGEFMNQFTSLGVAGAHGKTSTTGLLAHVLKNITDTSYLIGDGTGRGLANSQYFVFESDEYERHFMPYHPEYSIITNIDFDHPDYFTGVDDVFAAFNDYAKQVKKGLFVYGEDPYLRKLTSSAPIYYYGFKDNDDFVAYDIMRSTNGSDFKVRHGQNELGSFHVPAFGRHNVLNATAVIANLYIAGVEMDLVRQHLKTFSGVKRRFSEKLINDVTIIDDFAHHPTEIIATLDAARQKYPSKEIVAIFQPHTFTRTIALLDEFAQALNEADSVYLAQIYGSAREVDHGDVKVEDLADKIVKPAKVITVDNVSPLLDHHNAVYVFMGAGDIQLYERSFEELLSNLTKNTR</sequence>
<proteinExistence type="inferred from homology"/>
<dbReference type="EC" id="6.3.2.8" evidence="1"/>
<dbReference type="EMBL" id="AE014133">
    <property type="protein sequence ID" value="AAN59364.1"/>
    <property type="molecule type" value="Genomic_DNA"/>
</dbReference>
<dbReference type="RefSeq" id="NP_722058.3">
    <property type="nucleotide sequence ID" value="NC_004350.2"/>
</dbReference>
<dbReference type="SMR" id="Q8DSP4"/>
<dbReference type="STRING" id="210007.SMU_1731"/>
<dbReference type="KEGG" id="smu:SMU_1731"/>
<dbReference type="PATRIC" id="fig|210007.7.peg.1547"/>
<dbReference type="eggNOG" id="COG0773">
    <property type="taxonomic scope" value="Bacteria"/>
</dbReference>
<dbReference type="HOGENOM" id="CLU_028104_1_0_9"/>
<dbReference type="OrthoDB" id="9804126at2"/>
<dbReference type="UniPathway" id="UPA00219"/>
<dbReference type="Proteomes" id="UP000002512">
    <property type="component" value="Chromosome"/>
</dbReference>
<dbReference type="GO" id="GO:0005737">
    <property type="term" value="C:cytoplasm"/>
    <property type="evidence" value="ECO:0007669"/>
    <property type="project" value="UniProtKB-SubCell"/>
</dbReference>
<dbReference type="GO" id="GO:0005524">
    <property type="term" value="F:ATP binding"/>
    <property type="evidence" value="ECO:0007669"/>
    <property type="project" value="UniProtKB-UniRule"/>
</dbReference>
<dbReference type="GO" id="GO:0008763">
    <property type="term" value="F:UDP-N-acetylmuramate-L-alanine ligase activity"/>
    <property type="evidence" value="ECO:0007669"/>
    <property type="project" value="UniProtKB-UniRule"/>
</dbReference>
<dbReference type="GO" id="GO:0051301">
    <property type="term" value="P:cell division"/>
    <property type="evidence" value="ECO:0007669"/>
    <property type="project" value="UniProtKB-KW"/>
</dbReference>
<dbReference type="GO" id="GO:0071555">
    <property type="term" value="P:cell wall organization"/>
    <property type="evidence" value="ECO:0007669"/>
    <property type="project" value="UniProtKB-KW"/>
</dbReference>
<dbReference type="GO" id="GO:0009252">
    <property type="term" value="P:peptidoglycan biosynthetic process"/>
    <property type="evidence" value="ECO:0007669"/>
    <property type="project" value="UniProtKB-UniRule"/>
</dbReference>
<dbReference type="GO" id="GO:0008360">
    <property type="term" value="P:regulation of cell shape"/>
    <property type="evidence" value="ECO:0007669"/>
    <property type="project" value="UniProtKB-KW"/>
</dbReference>
<dbReference type="Gene3D" id="3.90.190.20">
    <property type="entry name" value="Mur ligase, C-terminal domain"/>
    <property type="match status" value="1"/>
</dbReference>
<dbReference type="Gene3D" id="3.40.1190.10">
    <property type="entry name" value="Mur-like, catalytic domain"/>
    <property type="match status" value="1"/>
</dbReference>
<dbReference type="Gene3D" id="3.40.50.720">
    <property type="entry name" value="NAD(P)-binding Rossmann-like Domain"/>
    <property type="match status" value="1"/>
</dbReference>
<dbReference type="HAMAP" id="MF_00046">
    <property type="entry name" value="MurC"/>
    <property type="match status" value="1"/>
</dbReference>
<dbReference type="InterPro" id="IPR036565">
    <property type="entry name" value="Mur-like_cat_sf"/>
</dbReference>
<dbReference type="InterPro" id="IPR004101">
    <property type="entry name" value="Mur_ligase_C"/>
</dbReference>
<dbReference type="InterPro" id="IPR036615">
    <property type="entry name" value="Mur_ligase_C_dom_sf"/>
</dbReference>
<dbReference type="InterPro" id="IPR013221">
    <property type="entry name" value="Mur_ligase_cen"/>
</dbReference>
<dbReference type="InterPro" id="IPR000713">
    <property type="entry name" value="Mur_ligase_N"/>
</dbReference>
<dbReference type="InterPro" id="IPR050061">
    <property type="entry name" value="MurCDEF_pg_biosynth"/>
</dbReference>
<dbReference type="InterPro" id="IPR005758">
    <property type="entry name" value="UDP-N-AcMur_Ala_ligase_MurC"/>
</dbReference>
<dbReference type="NCBIfam" id="TIGR01082">
    <property type="entry name" value="murC"/>
    <property type="match status" value="1"/>
</dbReference>
<dbReference type="PANTHER" id="PTHR43445:SF3">
    <property type="entry name" value="UDP-N-ACETYLMURAMATE--L-ALANINE LIGASE"/>
    <property type="match status" value="1"/>
</dbReference>
<dbReference type="PANTHER" id="PTHR43445">
    <property type="entry name" value="UDP-N-ACETYLMURAMATE--L-ALANINE LIGASE-RELATED"/>
    <property type="match status" value="1"/>
</dbReference>
<dbReference type="Pfam" id="PF01225">
    <property type="entry name" value="Mur_ligase"/>
    <property type="match status" value="1"/>
</dbReference>
<dbReference type="Pfam" id="PF02875">
    <property type="entry name" value="Mur_ligase_C"/>
    <property type="match status" value="1"/>
</dbReference>
<dbReference type="Pfam" id="PF08245">
    <property type="entry name" value="Mur_ligase_M"/>
    <property type="match status" value="1"/>
</dbReference>
<dbReference type="SUPFAM" id="SSF51984">
    <property type="entry name" value="MurCD N-terminal domain"/>
    <property type="match status" value="1"/>
</dbReference>
<dbReference type="SUPFAM" id="SSF53623">
    <property type="entry name" value="MurD-like peptide ligases, catalytic domain"/>
    <property type="match status" value="1"/>
</dbReference>
<dbReference type="SUPFAM" id="SSF53244">
    <property type="entry name" value="MurD-like peptide ligases, peptide-binding domain"/>
    <property type="match status" value="1"/>
</dbReference>
<protein>
    <recommendedName>
        <fullName evidence="1">UDP-N-acetylmuramate--L-alanine ligase</fullName>
        <ecNumber evidence="1">6.3.2.8</ecNumber>
    </recommendedName>
    <alternativeName>
        <fullName evidence="1">UDP-N-acetylmuramoyl-L-alanine synthetase</fullName>
    </alternativeName>
</protein>
<organism>
    <name type="scientific">Streptococcus mutans serotype c (strain ATCC 700610 / UA159)</name>
    <dbReference type="NCBI Taxonomy" id="210007"/>
    <lineage>
        <taxon>Bacteria</taxon>
        <taxon>Bacillati</taxon>
        <taxon>Bacillota</taxon>
        <taxon>Bacilli</taxon>
        <taxon>Lactobacillales</taxon>
        <taxon>Streptococcaceae</taxon>
        <taxon>Streptococcus</taxon>
    </lineage>
</organism>
<keyword id="KW-0067">ATP-binding</keyword>
<keyword id="KW-0131">Cell cycle</keyword>
<keyword id="KW-0132">Cell division</keyword>
<keyword id="KW-0133">Cell shape</keyword>
<keyword id="KW-0961">Cell wall biogenesis/degradation</keyword>
<keyword id="KW-0963">Cytoplasm</keyword>
<keyword id="KW-0436">Ligase</keyword>
<keyword id="KW-0547">Nucleotide-binding</keyword>
<keyword id="KW-0573">Peptidoglycan synthesis</keyword>
<keyword id="KW-1185">Reference proteome</keyword>
<gene>
    <name evidence="1" type="primary">murC</name>
    <name type="ordered locus">SMU_1731</name>
</gene>
<accession>Q8DSP4</accession>